<gene>
    <name evidence="1" type="primary">rnhB</name>
    <name type="ordered locus">Ecok1_01730</name>
    <name type="ORF">APECO1_1804</name>
</gene>
<dbReference type="EC" id="3.1.26.4" evidence="1"/>
<dbReference type="EMBL" id="CP000468">
    <property type="protein sequence ID" value="ABI99666.1"/>
    <property type="molecule type" value="Genomic_DNA"/>
</dbReference>
<dbReference type="RefSeq" id="WP_000569434.1">
    <property type="nucleotide sequence ID" value="NZ_CADILS010000027.1"/>
</dbReference>
<dbReference type="SMR" id="A1A7M7"/>
<dbReference type="KEGG" id="ecv:APECO1_1804"/>
<dbReference type="HOGENOM" id="CLU_036532_3_2_6"/>
<dbReference type="Proteomes" id="UP000008216">
    <property type="component" value="Chromosome"/>
</dbReference>
<dbReference type="GO" id="GO:0005737">
    <property type="term" value="C:cytoplasm"/>
    <property type="evidence" value="ECO:0007669"/>
    <property type="project" value="UniProtKB-SubCell"/>
</dbReference>
<dbReference type="GO" id="GO:0032299">
    <property type="term" value="C:ribonuclease H2 complex"/>
    <property type="evidence" value="ECO:0007669"/>
    <property type="project" value="TreeGrafter"/>
</dbReference>
<dbReference type="GO" id="GO:0030145">
    <property type="term" value="F:manganese ion binding"/>
    <property type="evidence" value="ECO:0007669"/>
    <property type="project" value="UniProtKB-UniRule"/>
</dbReference>
<dbReference type="GO" id="GO:0003723">
    <property type="term" value="F:RNA binding"/>
    <property type="evidence" value="ECO:0007669"/>
    <property type="project" value="InterPro"/>
</dbReference>
<dbReference type="GO" id="GO:0004523">
    <property type="term" value="F:RNA-DNA hybrid ribonuclease activity"/>
    <property type="evidence" value="ECO:0007669"/>
    <property type="project" value="UniProtKB-UniRule"/>
</dbReference>
<dbReference type="GO" id="GO:0043137">
    <property type="term" value="P:DNA replication, removal of RNA primer"/>
    <property type="evidence" value="ECO:0007669"/>
    <property type="project" value="TreeGrafter"/>
</dbReference>
<dbReference type="GO" id="GO:0006298">
    <property type="term" value="P:mismatch repair"/>
    <property type="evidence" value="ECO:0007669"/>
    <property type="project" value="TreeGrafter"/>
</dbReference>
<dbReference type="CDD" id="cd07182">
    <property type="entry name" value="RNase_HII_bacteria_HII_like"/>
    <property type="match status" value="1"/>
</dbReference>
<dbReference type="FunFam" id="3.30.420.10:FF:000006">
    <property type="entry name" value="Ribonuclease HII"/>
    <property type="match status" value="1"/>
</dbReference>
<dbReference type="Gene3D" id="3.30.420.10">
    <property type="entry name" value="Ribonuclease H-like superfamily/Ribonuclease H"/>
    <property type="match status" value="1"/>
</dbReference>
<dbReference type="HAMAP" id="MF_00052_B">
    <property type="entry name" value="RNase_HII_B"/>
    <property type="match status" value="1"/>
</dbReference>
<dbReference type="InterPro" id="IPR022898">
    <property type="entry name" value="RNase_HII"/>
</dbReference>
<dbReference type="InterPro" id="IPR001352">
    <property type="entry name" value="RNase_HII/HIII"/>
</dbReference>
<dbReference type="InterPro" id="IPR024567">
    <property type="entry name" value="RNase_HII/HIII_dom"/>
</dbReference>
<dbReference type="InterPro" id="IPR012337">
    <property type="entry name" value="RNaseH-like_sf"/>
</dbReference>
<dbReference type="InterPro" id="IPR036397">
    <property type="entry name" value="RNaseH_sf"/>
</dbReference>
<dbReference type="NCBIfam" id="NF000594">
    <property type="entry name" value="PRK00015.1-1"/>
    <property type="match status" value="1"/>
</dbReference>
<dbReference type="NCBIfam" id="NF000595">
    <property type="entry name" value="PRK00015.1-3"/>
    <property type="match status" value="1"/>
</dbReference>
<dbReference type="NCBIfam" id="NF000596">
    <property type="entry name" value="PRK00015.1-4"/>
    <property type="match status" value="1"/>
</dbReference>
<dbReference type="PANTHER" id="PTHR10954">
    <property type="entry name" value="RIBONUCLEASE H2 SUBUNIT A"/>
    <property type="match status" value="1"/>
</dbReference>
<dbReference type="PANTHER" id="PTHR10954:SF18">
    <property type="entry name" value="RIBONUCLEASE HII"/>
    <property type="match status" value="1"/>
</dbReference>
<dbReference type="Pfam" id="PF01351">
    <property type="entry name" value="RNase_HII"/>
    <property type="match status" value="1"/>
</dbReference>
<dbReference type="SUPFAM" id="SSF53098">
    <property type="entry name" value="Ribonuclease H-like"/>
    <property type="match status" value="1"/>
</dbReference>
<dbReference type="PROSITE" id="PS51975">
    <property type="entry name" value="RNASE_H_2"/>
    <property type="match status" value="1"/>
</dbReference>
<feature type="chain" id="PRO_1000031136" description="Ribonuclease HII">
    <location>
        <begin position="1"/>
        <end position="198"/>
    </location>
</feature>
<feature type="domain" description="RNase H type-2" evidence="2">
    <location>
        <begin position="10"/>
        <end position="198"/>
    </location>
</feature>
<feature type="binding site" evidence="1">
    <location>
        <position position="16"/>
    </location>
    <ligand>
        <name>a divalent metal cation</name>
        <dbReference type="ChEBI" id="CHEBI:60240"/>
    </ligand>
</feature>
<feature type="binding site" evidence="1">
    <location>
        <position position="17"/>
    </location>
    <ligand>
        <name>a divalent metal cation</name>
        <dbReference type="ChEBI" id="CHEBI:60240"/>
    </ligand>
</feature>
<feature type="binding site" evidence="1">
    <location>
        <position position="108"/>
    </location>
    <ligand>
        <name>a divalent metal cation</name>
        <dbReference type="ChEBI" id="CHEBI:60240"/>
    </ligand>
</feature>
<keyword id="KW-0963">Cytoplasm</keyword>
<keyword id="KW-0255">Endonuclease</keyword>
<keyword id="KW-0378">Hydrolase</keyword>
<keyword id="KW-0464">Manganese</keyword>
<keyword id="KW-0479">Metal-binding</keyword>
<keyword id="KW-0540">Nuclease</keyword>
<keyword id="KW-1185">Reference proteome</keyword>
<sequence length="198" mass="21510">MIEFVYPHTQLVAGVDEVGRGPLVGAVVTAAVILDPARPIAGLNDSKKLSEKRRLVLCEEIKEKALSWSLGRAEPHEIDELNILHATMLAMQRAVAGLHIAPEYVLIDGNRCPKLPMPSMAVVKGDSRVPEISAASILAKVTRDAEMAALDIVFPQYGFAQHKGYPTAFHLEKLAEHGATEHHRRSFGPVKRALGLAS</sequence>
<evidence type="ECO:0000255" key="1">
    <source>
        <dbReference type="HAMAP-Rule" id="MF_00052"/>
    </source>
</evidence>
<evidence type="ECO:0000255" key="2">
    <source>
        <dbReference type="PROSITE-ProRule" id="PRU01319"/>
    </source>
</evidence>
<protein>
    <recommendedName>
        <fullName evidence="1">Ribonuclease HII</fullName>
        <shortName evidence="1">RNase HII</shortName>
        <ecNumber evidence="1">3.1.26.4</ecNumber>
    </recommendedName>
</protein>
<comment type="function">
    <text evidence="1">Endonuclease that specifically degrades the RNA of RNA-DNA hybrids.</text>
</comment>
<comment type="catalytic activity">
    <reaction evidence="1">
        <text>Endonucleolytic cleavage to 5'-phosphomonoester.</text>
        <dbReference type="EC" id="3.1.26.4"/>
    </reaction>
</comment>
<comment type="cofactor">
    <cofactor evidence="1">
        <name>Mn(2+)</name>
        <dbReference type="ChEBI" id="CHEBI:29035"/>
    </cofactor>
    <cofactor evidence="1">
        <name>Mg(2+)</name>
        <dbReference type="ChEBI" id="CHEBI:18420"/>
    </cofactor>
    <text evidence="1">Manganese or magnesium. Binds 1 divalent metal ion per monomer in the absence of substrate. May bind a second metal ion after substrate binding.</text>
</comment>
<comment type="subcellular location">
    <subcellularLocation>
        <location evidence="1">Cytoplasm</location>
    </subcellularLocation>
</comment>
<comment type="similarity">
    <text evidence="1">Belongs to the RNase HII family.</text>
</comment>
<reference key="1">
    <citation type="journal article" date="2007" name="J. Bacteriol.">
        <title>The genome sequence of avian pathogenic Escherichia coli strain O1:K1:H7 shares strong similarities with human extraintestinal pathogenic E. coli genomes.</title>
        <authorList>
            <person name="Johnson T.J."/>
            <person name="Kariyawasam S."/>
            <person name="Wannemuehler Y."/>
            <person name="Mangiamele P."/>
            <person name="Johnson S.J."/>
            <person name="Doetkott C."/>
            <person name="Skyberg J.A."/>
            <person name="Lynne A.M."/>
            <person name="Johnson J.R."/>
            <person name="Nolan L.K."/>
        </authorList>
    </citation>
    <scope>NUCLEOTIDE SEQUENCE [LARGE SCALE GENOMIC DNA]</scope>
</reference>
<name>RNH2_ECOK1</name>
<proteinExistence type="inferred from homology"/>
<organism>
    <name type="scientific">Escherichia coli O1:K1 / APEC</name>
    <dbReference type="NCBI Taxonomy" id="405955"/>
    <lineage>
        <taxon>Bacteria</taxon>
        <taxon>Pseudomonadati</taxon>
        <taxon>Pseudomonadota</taxon>
        <taxon>Gammaproteobacteria</taxon>
        <taxon>Enterobacterales</taxon>
        <taxon>Enterobacteriaceae</taxon>
        <taxon>Escherichia</taxon>
    </lineage>
</organism>
<accession>A1A7M7</accession>